<proteinExistence type="inferred from homology"/>
<dbReference type="EMBL" id="AE003852">
    <property type="protein sequence ID" value="AAF93371.1"/>
    <property type="molecule type" value="Genomic_DNA"/>
</dbReference>
<dbReference type="PIR" id="D82351">
    <property type="entry name" value="D82351"/>
</dbReference>
<dbReference type="RefSeq" id="NP_229852.1">
    <property type="nucleotide sequence ID" value="NC_002505.1"/>
</dbReference>
<dbReference type="SMR" id="Q9KVF1"/>
<dbReference type="STRING" id="243277.VC_0195"/>
<dbReference type="DNASU" id="2614559"/>
<dbReference type="EnsemblBacteria" id="AAF93371">
    <property type="protein sequence ID" value="AAF93371"/>
    <property type="gene ID" value="VC_0195"/>
</dbReference>
<dbReference type="KEGG" id="vch:VC_0195"/>
<dbReference type="PATRIC" id="fig|243277.26.peg.176"/>
<dbReference type="eggNOG" id="COG2962">
    <property type="taxonomic scope" value="Bacteria"/>
</dbReference>
<dbReference type="HOGENOM" id="CLU_054508_1_0_6"/>
<dbReference type="Proteomes" id="UP000000584">
    <property type="component" value="Chromosome 1"/>
</dbReference>
<dbReference type="GO" id="GO:0005886">
    <property type="term" value="C:plasma membrane"/>
    <property type="evidence" value="ECO:0000318"/>
    <property type="project" value="GO_Central"/>
</dbReference>
<dbReference type="InterPro" id="IPR000620">
    <property type="entry name" value="EamA_dom"/>
</dbReference>
<dbReference type="InterPro" id="IPR004626">
    <property type="entry name" value="RarD"/>
</dbReference>
<dbReference type="NCBIfam" id="TIGR00688">
    <property type="entry name" value="rarD"/>
    <property type="match status" value="1"/>
</dbReference>
<dbReference type="PANTHER" id="PTHR22911">
    <property type="entry name" value="ACYL-MALONYL CONDENSING ENZYME-RELATED"/>
    <property type="match status" value="1"/>
</dbReference>
<dbReference type="PANTHER" id="PTHR22911:SF137">
    <property type="entry name" value="SOLUTE CARRIER FAMILY 35 MEMBER G2-RELATED"/>
    <property type="match status" value="1"/>
</dbReference>
<dbReference type="Pfam" id="PF00892">
    <property type="entry name" value="EamA"/>
    <property type="match status" value="2"/>
</dbReference>
<dbReference type="SUPFAM" id="SSF103481">
    <property type="entry name" value="Multidrug resistance efflux transporter EmrE"/>
    <property type="match status" value="2"/>
</dbReference>
<name>Y195_VIBCH</name>
<reference key="1">
    <citation type="journal article" date="2000" name="Nature">
        <title>DNA sequence of both chromosomes of the cholera pathogen Vibrio cholerae.</title>
        <authorList>
            <person name="Heidelberg J.F."/>
            <person name="Eisen J.A."/>
            <person name="Nelson W.C."/>
            <person name="Clayton R.A."/>
            <person name="Gwinn M.L."/>
            <person name="Dodson R.J."/>
            <person name="Haft D.H."/>
            <person name="Hickey E.K."/>
            <person name="Peterson J.D."/>
            <person name="Umayam L.A."/>
            <person name="Gill S.R."/>
            <person name="Nelson K.E."/>
            <person name="Read T.D."/>
            <person name="Tettelin H."/>
            <person name="Richardson D.L."/>
            <person name="Ermolaeva M.D."/>
            <person name="Vamathevan J.J."/>
            <person name="Bass S."/>
            <person name="Qin H."/>
            <person name="Dragoi I."/>
            <person name="Sellers P."/>
            <person name="McDonald L.A."/>
            <person name="Utterback T.R."/>
            <person name="Fleischmann R.D."/>
            <person name="Nierman W.C."/>
            <person name="White O."/>
            <person name="Salzberg S.L."/>
            <person name="Smith H.O."/>
            <person name="Colwell R.R."/>
            <person name="Mekalanos J.J."/>
            <person name="Venter J.C."/>
            <person name="Fraser C.M."/>
        </authorList>
    </citation>
    <scope>NUCLEOTIDE SEQUENCE [LARGE SCALE GENOMIC DNA]</scope>
    <source>
        <strain>ATCC 39315 / El Tor Inaba N16961</strain>
    </source>
</reference>
<feature type="chain" id="PRO_0000108161" description="Uncharacterized transporter VC_0195">
    <location>
        <begin position="1"/>
        <end position="302"/>
    </location>
</feature>
<feature type="transmembrane region" description="Helical" evidence="1">
    <location>
        <begin position="13"/>
        <end position="32"/>
    </location>
</feature>
<feature type="transmembrane region" description="Helical" evidence="1">
    <location>
        <begin position="42"/>
        <end position="64"/>
    </location>
</feature>
<feature type="transmembrane region" description="Helical" evidence="1">
    <location>
        <begin position="77"/>
        <end position="96"/>
    </location>
</feature>
<feature type="transmembrane region" description="Helical" evidence="1">
    <location>
        <begin position="106"/>
        <end position="125"/>
    </location>
</feature>
<feature type="transmembrane region" description="Helical" evidence="1">
    <location>
        <begin position="132"/>
        <end position="150"/>
    </location>
</feature>
<feature type="transmembrane region" description="Helical" evidence="1">
    <location>
        <begin position="154"/>
        <end position="171"/>
    </location>
</feature>
<feature type="transmembrane region" description="Helical" evidence="1">
    <location>
        <begin position="183"/>
        <end position="202"/>
    </location>
</feature>
<feature type="transmembrane region" description="Helical" evidence="1">
    <location>
        <begin position="217"/>
        <end position="239"/>
    </location>
</feature>
<feature type="transmembrane region" description="Helical" evidence="1">
    <location>
        <begin position="246"/>
        <end position="265"/>
    </location>
</feature>
<feature type="transmembrane region" description="Helical" evidence="1">
    <location>
        <begin position="275"/>
        <end position="297"/>
    </location>
</feature>
<feature type="domain" description="EamA">
    <location>
        <begin position="22"/>
        <end position="149"/>
    </location>
</feature>
<sequence>MFMTPDQQDAKKGILLAISAYTMWGIAPIYFKALGAVSALEILSHRVVWSFVLLAVLIHLGRRWRSVVGVVHTPRKFWLLLVTALLVGGNWLIFIWSINANHMLDASLGYYINPLLNVLLGMLFLGERLRKLQWFAVALAAIGVGIQLVVFGSVPIVAIALATSFGFYGLLRKKIQVDAQTGLFLETLFMLPAAAIYLIWLADTPTSDMALNTWQLNLLLVCAGVVTTLPLLCFTGAAARLKLSTLGFFQYIGPSLMFLLAVLVYGEAFTSDKAITFAFIWSALVIFSVDGLKAGHAARRAR</sequence>
<organism>
    <name type="scientific">Vibrio cholerae serotype O1 (strain ATCC 39315 / El Tor Inaba N16961)</name>
    <dbReference type="NCBI Taxonomy" id="243277"/>
    <lineage>
        <taxon>Bacteria</taxon>
        <taxon>Pseudomonadati</taxon>
        <taxon>Pseudomonadota</taxon>
        <taxon>Gammaproteobacteria</taxon>
        <taxon>Vibrionales</taxon>
        <taxon>Vibrionaceae</taxon>
        <taxon>Vibrio</taxon>
    </lineage>
</organism>
<gene>
    <name type="ordered locus">VC_0195</name>
</gene>
<keyword id="KW-1003">Cell membrane</keyword>
<keyword id="KW-0472">Membrane</keyword>
<keyword id="KW-1185">Reference proteome</keyword>
<keyword id="KW-0812">Transmembrane</keyword>
<keyword id="KW-1133">Transmembrane helix</keyword>
<keyword id="KW-0813">Transport</keyword>
<evidence type="ECO:0000255" key="1"/>
<evidence type="ECO:0000305" key="2"/>
<accession>Q9KVF1</accession>
<protein>
    <recommendedName>
        <fullName>Uncharacterized transporter VC_0195</fullName>
    </recommendedName>
</protein>
<comment type="subcellular location">
    <subcellularLocation>
        <location evidence="2">Cell membrane</location>
        <topology evidence="2">Multi-pass membrane protein</topology>
    </subcellularLocation>
</comment>
<comment type="similarity">
    <text evidence="2">Belongs to the EamA transporter family.</text>
</comment>